<reference key="1">
    <citation type="journal article" date="1993" name="Mol. Microbiol.">
        <title>Characterization of pilQ, a new gene required for the biogenesis of type 4 fimbriae in Pseudomonas aeruginosa.</title>
        <authorList>
            <person name="Martin P.R."/>
            <person name="Hobbs M."/>
            <person name="Free P.D."/>
            <person name="Jeske Y."/>
            <person name="Mattick J.S."/>
        </authorList>
    </citation>
    <scope>NUCLEOTIDE SEQUENCE [GENOMIC DNA]</scope>
    <source>
        <strain>ATCC 25102 / PAK</strain>
    </source>
</reference>
<reference key="2">
    <citation type="journal article" date="2000" name="Nature">
        <title>Complete genome sequence of Pseudomonas aeruginosa PAO1, an opportunistic pathogen.</title>
        <authorList>
            <person name="Stover C.K."/>
            <person name="Pham X.-Q.T."/>
            <person name="Erwin A.L."/>
            <person name="Mizoguchi S.D."/>
            <person name="Warrener P."/>
            <person name="Hickey M.J."/>
            <person name="Brinkman F.S.L."/>
            <person name="Hufnagle W.O."/>
            <person name="Kowalik D.J."/>
            <person name="Lagrou M."/>
            <person name="Garber R.L."/>
            <person name="Goltry L."/>
            <person name="Tolentino E."/>
            <person name="Westbrock-Wadman S."/>
            <person name="Yuan Y."/>
            <person name="Brody L.L."/>
            <person name="Coulter S.N."/>
            <person name="Folger K.R."/>
            <person name="Kas A."/>
            <person name="Larbig K."/>
            <person name="Lim R.M."/>
            <person name="Smith K.A."/>
            <person name="Spencer D.H."/>
            <person name="Wong G.K.-S."/>
            <person name="Wu Z."/>
            <person name="Paulsen I.T."/>
            <person name="Reizer J."/>
            <person name="Saier M.H. Jr."/>
            <person name="Hancock R.E.W."/>
            <person name="Lory S."/>
            <person name="Olson M.V."/>
        </authorList>
    </citation>
    <scope>NUCLEOTIDE SEQUENCE [LARGE SCALE GENOMIC DNA]</scope>
    <source>
        <strain>ATCC 15692 / DSM 22644 / CIP 104116 / JCM 14847 / LMG 12228 / 1C / PRS 101 / PAO1</strain>
    </source>
</reference>
<feature type="signal peptide" evidence="1">
    <location>
        <begin position="1"/>
        <end position="24"/>
    </location>
</feature>
<feature type="chain" id="PRO_0000013119" description="Fimbrial assembly protein PilQ">
    <location>
        <begin position="25"/>
        <end position="714"/>
    </location>
</feature>
<feature type="sequence conflict" description="In Ref. 1; AAA16704." evidence="2" ref="1">
    <original>D</original>
    <variation>E</variation>
    <location>
        <position position="391"/>
    </location>
</feature>
<feature type="sequence conflict" description="In Ref. 1; AAA16704." evidence="2" ref="1">
    <original>G</original>
    <variation>A</variation>
    <location>
        <position position="411"/>
    </location>
</feature>
<feature type="sequence conflict" description="In Ref. 1; AAA16704." evidence="2" ref="1">
    <original>LSAMEKTGNGEI</original>
    <variation>PVGDGKDRQRRV</variation>
    <location>
        <begin position="547"/>
        <end position="558"/>
    </location>
</feature>
<comment type="function">
    <text>Essential for the formation of pili. Involved in the biogenesis of type 4 fimbriae probably by serving as a 'porthole' allowing passage of the fimbrae through the outer membrane.</text>
</comment>
<comment type="subcellular location">
    <subcellularLocation>
        <location evidence="2">Cell outer membrane</location>
    </subcellularLocation>
</comment>
<comment type="similarity">
    <text evidence="2">Belongs to the bacterial secretin family. PilQ subfamily.</text>
</comment>
<comment type="sequence caution" evidence="2">
    <conflict type="erroneous initiation">
        <sequence resource="EMBL-CDS" id="AAA16704"/>
    </conflict>
    <text>Truncated N-terminus.</text>
</comment>
<evidence type="ECO:0000255" key="1"/>
<evidence type="ECO:0000305" key="2"/>
<organism>
    <name type="scientific">Pseudomonas aeruginosa (strain ATCC 15692 / DSM 22644 / CIP 104116 / JCM 14847 / LMG 12228 / 1C / PRS 101 / PAO1)</name>
    <dbReference type="NCBI Taxonomy" id="208964"/>
    <lineage>
        <taxon>Bacteria</taxon>
        <taxon>Pseudomonadati</taxon>
        <taxon>Pseudomonadota</taxon>
        <taxon>Gammaproteobacteria</taxon>
        <taxon>Pseudomonadales</taxon>
        <taxon>Pseudomonadaceae</taxon>
        <taxon>Pseudomonas</taxon>
    </lineage>
</organism>
<protein>
    <recommendedName>
        <fullName>Fimbrial assembly protein PilQ</fullName>
    </recommendedName>
</protein>
<name>PILQ_PSEAE</name>
<accession>P34750</accession>
<dbReference type="EMBL" id="L13865">
    <property type="protein sequence ID" value="AAA16704.1"/>
    <property type="status" value="ALT_INIT"/>
    <property type="molecule type" value="Unassigned_DNA"/>
</dbReference>
<dbReference type="EMBL" id="AE004091">
    <property type="protein sequence ID" value="AAG08425.1"/>
    <property type="molecule type" value="Genomic_DNA"/>
</dbReference>
<dbReference type="PIR" id="A83016">
    <property type="entry name" value="A83016"/>
</dbReference>
<dbReference type="PIR" id="S37345">
    <property type="entry name" value="S37345"/>
</dbReference>
<dbReference type="RefSeq" id="NP_253727.1">
    <property type="nucleotide sequence ID" value="NC_002516.2"/>
</dbReference>
<dbReference type="RefSeq" id="WP_003114575.1">
    <property type="nucleotide sequence ID" value="NZ_QZGE01000002.1"/>
</dbReference>
<dbReference type="PDB" id="6VE2">
    <property type="method" value="EM"/>
    <property type="resolution" value="4.30 A"/>
    <property type="chains" value="A/B/C/D/E/F/G/H/I/J/K/L/M/N=1-714"/>
</dbReference>
<dbReference type="PDB" id="6VE3">
    <property type="method" value="EM"/>
    <property type="resolution" value="4.30 A"/>
    <property type="chains" value="A/B/C/D/E/F/G/H/I/J/K/L/M/N=1-714"/>
</dbReference>
<dbReference type="PDB" id="6VE4">
    <property type="method" value="EM"/>
    <property type="resolution" value="6.90 A"/>
    <property type="chains" value="A/B/C/D/E/F/G/H/I/J/K/L/M/N/O=1-714"/>
</dbReference>
<dbReference type="PDBsum" id="6VE2"/>
<dbReference type="PDBsum" id="6VE3"/>
<dbReference type="PDBsum" id="6VE4"/>
<dbReference type="EMDB" id="EMD-21152"/>
<dbReference type="EMDB" id="EMD-21153"/>
<dbReference type="EMDB" id="EMD-21154"/>
<dbReference type="SMR" id="P34750"/>
<dbReference type="FunCoup" id="P34750">
    <property type="interactions" value="138"/>
</dbReference>
<dbReference type="STRING" id="208964.PA5040"/>
<dbReference type="TCDB" id="1.B.22.2.1">
    <property type="family name" value="the outer bacterial membrane secretin (secretin) family"/>
</dbReference>
<dbReference type="PaxDb" id="208964-PA5040"/>
<dbReference type="GeneID" id="880962"/>
<dbReference type="KEGG" id="pae:PA5040"/>
<dbReference type="PATRIC" id="fig|208964.12.peg.5284"/>
<dbReference type="PseudoCAP" id="PA5040"/>
<dbReference type="HOGENOM" id="CLU_006756_0_2_6"/>
<dbReference type="InParanoid" id="P34750"/>
<dbReference type="OrthoDB" id="9779724at2"/>
<dbReference type="PhylomeDB" id="P34750"/>
<dbReference type="BioCyc" id="PAER208964:G1FZ6-5156-MONOMER"/>
<dbReference type="Proteomes" id="UP000002438">
    <property type="component" value="Chromosome"/>
</dbReference>
<dbReference type="GO" id="GO:0009279">
    <property type="term" value="C:cell outer membrane"/>
    <property type="evidence" value="ECO:0007669"/>
    <property type="project" value="UniProtKB-SubCell"/>
</dbReference>
<dbReference type="GO" id="GO:0009306">
    <property type="term" value="P:protein secretion"/>
    <property type="evidence" value="ECO:0007669"/>
    <property type="project" value="InterPro"/>
</dbReference>
<dbReference type="GO" id="GO:0043683">
    <property type="term" value="P:type IV pilus assembly"/>
    <property type="evidence" value="ECO:0000315"/>
    <property type="project" value="PseudoCAP"/>
</dbReference>
<dbReference type="FunFam" id="3.30.1370.130:FF:000001">
    <property type="entry name" value="Type IV pilus secretin PilQ"/>
    <property type="match status" value="1"/>
</dbReference>
<dbReference type="Gene3D" id="2.60.40.3470">
    <property type="match status" value="1"/>
</dbReference>
<dbReference type="Gene3D" id="3.30.1370.120">
    <property type="match status" value="1"/>
</dbReference>
<dbReference type="Gene3D" id="3.30.1370.130">
    <property type="match status" value="1"/>
</dbReference>
<dbReference type="InterPro" id="IPR021731">
    <property type="entry name" value="AMIN_dom"/>
</dbReference>
<dbReference type="InterPro" id="IPR001775">
    <property type="entry name" value="GspD/PilQ"/>
</dbReference>
<dbReference type="InterPro" id="IPR005644">
    <property type="entry name" value="NolW-like"/>
</dbReference>
<dbReference type="InterPro" id="IPR038591">
    <property type="entry name" value="NolW-like_sf"/>
</dbReference>
<dbReference type="InterPro" id="IPR013355">
    <property type="entry name" value="Pilus_4_PilQ"/>
</dbReference>
<dbReference type="InterPro" id="IPR011662">
    <property type="entry name" value="Secretin/TonB_short_N"/>
</dbReference>
<dbReference type="InterPro" id="IPR004846">
    <property type="entry name" value="T2SS/T3SS_dom"/>
</dbReference>
<dbReference type="InterPro" id="IPR004845">
    <property type="entry name" value="T2SS_GspD_CS"/>
</dbReference>
<dbReference type="InterPro" id="IPR051808">
    <property type="entry name" value="Type_IV_pilus_biogenesis"/>
</dbReference>
<dbReference type="NCBIfam" id="TIGR02515">
    <property type="entry name" value="IV_pilus_PilQ"/>
    <property type="match status" value="1"/>
</dbReference>
<dbReference type="PANTHER" id="PTHR30604:SF1">
    <property type="entry name" value="DNA UTILIZATION PROTEIN HOFQ"/>
    <property type="match status" value="1"/>
</dbReference>
<dbReference type="PANTHER" id="PTHR30604">
    <property type="entry name" value="PROTEIN TRANSPORT PROTEIN HOFQ"/>
    <property type="match status" value="1"/>
</dbReference>
<dbReference type="Pfam" id="PF11741">
    <property type="entry name" value="AMIN"/>
    <property type="match status" value="2"/>
</dbReference>
<dbReference type="Pfam" id="PF00263">
    <property type="entry name" value="Secretin"/>
    <property type="match status" value="1"/>
</dbReference>
<dbReference type="Pfam" id="PF03958">
    <property type="entry name" value="Secretin_N"/>
    <property type="match status" value="1"/>
</dbReference>
<dbReference type="Pfam" id="PF07660">
    <property type="entry name" value="STN"/>
    <property type="match status" value="1"/>
</dbReference>
<dbReference type="PRINTS" id="PR00811">
    <property type="entry name" value="BCTERIALGSPD"/>
</dbReference>
<dbReference type="SMART" id="SM00965">
    <property type="entry name" value="STN"/>
    <property type="match status" value="1"/>
</dbReference>
<dbReference type="PROSITE" id="PS00875">
    <property type="entry name" value="T2SP_D"/>
    <property type="match status" value="1"/>
</dbReference>
<proteinExistence type="evidence at protein level"/>
<gene>
    <name type="primary">pilQ</name>
    <name type="ordered locus">PA5040</name>
</gene>
<keyword id="KW-0002">3D-structure</keyword>
<keyword id="KW-0998">Cell outer membrane</keyword>
<keyword id="KW-1029">Fimbrium biogenesis</keyword>
<keyword id="KW-0472">Membrane</keyword>
<keyword id="KW-0653">Protein transport</keyword>
<keyword id="KW-1185">Reference proteome</keyword>
<keyword id="KW-0732">Signal</keyword>
<keyword id="KW-0813">Transport</keyword>
<sequence>MNSGLSRLGIALLAAMFAPALLAADLEKLDVAALPGDRVELKLQFDEPVAAPRGYTIEQPARIALDLPGVQNKLGTKNRELSVGNTRSVTVVEAKDRTRLIINLTALSSYTTRVEGNNLFVVVGNSPAGASVASAAPVKASPAPASYAQPIKPKPYVPAGRAIRNIDFQRGEKGEGNVVIDLSDPTLSPDIQEQGGKIRLDFAKTQLPDALRVRLDVKDFATPVQFVNASAQSDRTSITIEPSGLYDYLVYQTDNRLTVSIKPMTTEDAERRKKDNFAYTGEKLSLNFQDIDVRSVLQLIADFTDLNLVASDTVQGNITLRLQNVPWDQALDLVLKTKGLDKRKLGNVLLVAPADEIAARERQELEAQKQIAELAPLRRELIQVNYAKAADIAKLFQSVTSDGGQEGKEGGRGSITVDDRTNSIIAYQPQERLDELRRIVSQLDIPVRQVMIEARIVEANVGYDKSLGVRWGGAYHKGNWSGYGKDGNIGIKDEDGMNCGPIAGSCTFPTTGTSKSPSPFVDLGAKDATSGIGIGFITDNIILDLQLSAMEKTGNGEIVSQPKVVTSDKETAKILKGSEVPYQEASSSGATSTSFKEAALSLEVTPQITPDNRIIVEVKVTKDAPDYQNMLNGVPPINKNEVNAKILVNDGETIVIGGVFSNEQSKSVEKVPFLGELPYLGRLFRRDTVTDRKNELLVFLTPRIMNNQAIAIGR</sequence>